<dbReference type="EMBL" id="AM743169">
    <property type="protein sequence ID" value="CAQ46803.1"/>
    <property type="molecule type" value="Genomic_DNA"/>
</dbReference>
<dbReference type="RefSeq" id="WP_005410435.1">
    <property type="nucleotide sequence ID" value="NC_010943.1"/>
</dbReference>
<dbReference type="SMR" id="B2FN76"/>
<dbReference type="EnsemblBacteria" id="CAQ46803">
    <property type="protein sequence ID" value="CAQ46803"/>
    <property type="gene ID" value="Smlt3375"/>
</dbReference>
<dbReference type="GeneID" id="97261970"/>
<dbReference type="KEGG" id="sml:Smlt3375"/>
<dbReference type="eggNOG" id="COG0292">
    <property type="taxonomic scope" value="Bacteria"/>
</dbReference>
<dbReference type="HOGENOM" id="CLU_123265_0_1_6"/>
<dbReference type="Proteomes" id="UP000008840">
    <property type="component" value="Chromosome"/>
</dbReference>
<dbReference type="GO" id="GO:1990904">
    <property type="term" value="C:ribonucleoprotein complex"/>
    <property type="evidence" value="ECO:0007669"/>
    <property type="project" value="UniProtKB-KW"/>
</dbReference>
<dbReference type="GO" id="GO:0005840">
    <property type="term" value="C:ribosome"/>
    <property type="evidence" value="ECO:0007669"/>
    <property type="project" value="UniProtKB-KW"/>
</dbReference>
<dbReference type="GO" id="GO:0019843">
    <property type="term" value="F:rRNA binding"/>
    <property type="evidence" value="ECO:0007669"/>
    <property type="project" value="UniProtKB-UniRule"/>
</dbReference>
<dbReference type="GO" id="GO:0003735">
    <property type="term" value="F:structural constituent of ribosome"/>
    <property type="evidence" value="ECO:0007669"/>
    <property type="project" value="InterPro"/>
</dbReference>
<dbReference type="GO" id="GO:0000027">
    <property type="term" value="P:ribosomal large subunit assembly"/>
    <property type="evidence" value="ECO:0007669"/>
    <property type="project" value="UniProtKB-UniRule"/>
</dbReference>
<dbReference type="GO" id="GO:0006412">
    <property type="term" value="P:translation"/>
    <property type="evidence" value="ECO:0007669"/>
    <property type="project" value="InterPro"/>
</dbReference>
<dbReference type="CDD" id="cd07026">
    <property type="entry name" value="Ribosomal_L20"/>
    <property type="match status" value="1"/>
</dbReference>
<dbReference type="FunFam" id="1.10.1900.20:FF:000001">
    <property type="entry name" value="50S ribosomal protein L20"/>
    <property type="match status" value="1"/>
</dbReference>
<dbReference type="Gene3D" id="6.10.160.10">
    <property type="match status" value="1"/>
</dbReference>
<dbReference type="Gene3D" id="1.10.1900.20">
    <property type="entry name" value="Ribosomal protein L20"/>
    <property type="match status" value="1"/>
</dbReference>
<dbReference type="HAMAP" id="MF_00382">
    <property type="entry name" value="Ribosomal_bL20"/>
    <property type="match status" value="1"/>
</dbReference>
<dbReference type="InterPro" id="IPR005813">
    <property type="entry name" value="Ribosomal_bL20"/>
</dbReference>
<dbReference type="InterPro" id="IPR049946">
    <property type="entry name" value="RIBOSOMAL_L20_CS"/>
</dbReference>
<dbReference type="InterPro" id="IPR035566">
    <property type="entry name" value="Ribosomal_protein_bL20_C"/>
</dbReference>
<dbReference type="NCBIfam" id="TIGR01032">
    <property type="entry name" value="rplT_bact"/>
    <property type="match status" value="1"/>
</dbReference>
<dbReference type="PANTHER" id="PTHR10986">
    <property type="entry name" value="39S RIBOSOMAL PROTEIN L20"/>
    <property type="match status" value="1"/>
</dbReference>
<dbReference type="Pfam" id="PF00453">
    <property type="entry name" value="Ribosomal_L20"/>
    <property type="match status" value="1"/>
</dbReference>
<dbReference type="PRINTS" id="PR00062">
    <property type="entry name" value="RIBOSOMALL20"/>
</dbReference>
<dbReference type="SUPFAM" id="SSF74731">
    <property type="entry name" value="Ribosomal protein L20"/>
    <property type="match status" value="1"/>
</dbReference>
<dbReference type="PROSITE" id="PS00937">
    <property type="entry name" value="RIBOSOMAL_L20"/>
    <property type="match status" value="1"/>
</dbReference>
<feature type="chain" id="PRO_1000122377" description="Large ribosomal subunit protein bL20">
    <location>
        <begin position="1"/>
        <end position="119"/>
    </location>
</feature>
<accession>B2FN76</accession>
<protein>
    <recommendedName>
        <fullName evidence="1">Large ribosomal subunit protein bL20</fullName>
    </recommendedName>
    <alternativeName>
        <fullName evidence="2">50S ribosomal protein L20</fullName>
    </alternativeName>
</protein>
<organism>
    <name type="scientific">Stenotrophomonas maltophilia (strain K279a)</name>
    <dbReference type="NCBI Taxonomy" id="522373"/>
    <lineage>
        <taxon>Bacteria</taxon>
        <taxon>Pseudomonadati</taxon>
        <taxon>Pseudomonadota</taxon>
        <taxon>Gammaproteobacteria</taxon>
        <taxon>Lysobacterales</taxon>
        <taxon>Lysobacteraceae</taxon>
        <taxon>Stenotrophomonas</taxon>
        <taxon>Stenotrophomonas maltophilia group</taxon>
    </lineage>
</organism>
<name>RL20_STRMK</name>
<gene>
    <name evidence="1" type="primary">rplT</name>
    <name type="ordered locus">Smlt3375</name>
</gene>
<sequence>MARVKRGVQARRRHKKILDLAKGYYNARRKVFRVAKQAVIKAQQYAYIGRKQKKRNFRSLWITRINAAARINGLSYSRFMNGLLKAGITLDRKVLADIAVHDAAGFAALAEKAKGALAA</sequence>
<evidence type="ECO:0000255" key="1">
    <source>
        <dbReference type="HAMAP-Rule" id="MF_00382"/>
    </source>
</evidence>
<evidence type="ECO:0000305" key="2"/>
<keyword id="KW-1185">Reference proteome</keyword>
<keyword id="KW-0687">Ribonucleoprotein</keyword>
<keyword id="KW-0689">Ribosomal protein</keyword>
<keyword id="KW-0694">RNA-binding</keyword>
<keyword id="KW-0699">rRNA-binding</keyword>
<reference key="1">
    <citation type="journal article" date="2008" name="Genome Biol.">
        <title>The complete genome, comparative and functional analysis of Stenotrophomonas maltophilia reveals an organism heavily shielded by drug resistance determinants.</title>
        <authorList>
            <person name="Crossman L.C."/>
            <person name="Gould V.C."/>
            <person name="Dow J.M."/>
            <person name="Vernikos G.S."/>
            <person name="Okazaki A."/>
            <person name="Sebaihia M."/>
            <person name="Saunders D."/>
            <person name="Arrowsmith C."/>
            <person name="Carver T."/>
            <person name="Peters N."/>
            <person name="Adlem E."/>
            <person name="Kerhornou A."/>
            <person name="Lord A."/>
            <person name="Murphy L."/>
            <person name="Seeger K."/>
            <person name="Squares R."/>
            <person name="Rutter S."/>
            <person name="Quail M.A."/>
            <person name="Rajandream M.A."/>
            <person name="Harris D."/>
            <person name="Churcher C."/>
            <person name="Bentley S.D."/>
            <person name="Parkhill J."/>
            <person name="Thomson N.R."/>
            <person name="Avison M.B."/>
        </authorList>
    </citation>
    <scope>NUCLEOTIDE SEQUENCE [LARGE SCALE GENOMIC DNA]</scope>
    <source>
        <strain>K279a</strain>
    </source>
</reference>
<proteinExistence type="inferred from homology"/>
<comment type="function">
    <text evidence="1">Binds directly to 23S ribosomal RNA and is necessary for the in vitro assembly process of the 50S ribosomal subunit. It is not involved in the protein synthesizing functions of that subunit.</text>
</comment>
<comment type="similarity">
    <text evidence="1">Belongs to the bacterial ribosomal protein bL20 family.</text>
</comment>